<gene>
    <name evidence="1" type="primary">surA</name>
    <name type="ordered locus">Bcen_2098</name>
</gene>
<protein>
    <recommendedName>
        <fullName evidence="1">Chaperone SurA</fullName>
    </recommendedName>
    <alternativeName>
        <fullName evidence="1">Peptidyl-prolyl cis-trans isomerase SurA</fullName>
        <shortName evidence="1">PPIase SurA</shortName>
        <ecNumber evidence="1">5.2.1.8</ecNumber>
    </alternativeName>
    <alternativeName>
        <fullName evidence="1">Rotamase SurA</fullName>
    </alternativeName>
</protein>
<feature type="signal peptide" evidence="1">
    <location>
        <begin position="1"/>
        <end position="28"/>
    </location>
</feature>
<feature type="chain" id="PRO_5000123057" description="Chaperone SurA">
    <location>
        <begin position="29"/>
        <end position="452"/>
    </location>
</feature>
<feature type="domain" description="PpiC 1" evidence="1">
    <location>
        <begin position="186"/>
        <end position="288"/>
    </location>
</feature>
<feature type="domain" description="PpiC 2" evidence="1">
    <location>
        <begin position="302"/>
        <end position="400"/>
    </location>
</feature>
<comment type="function">
    <text evidence="1">Chaperone involved in the correct folding and assembly of outer membrane proteins. Recognizes specific patterns of aromatic residues and the orientation of their side chains, which are found more frequently in integral outer membrane proteins. May act in both early periplasmic and late outer membrane-associated steps of protein maturation.</text>
</comment>
<comment type="catalytic activity">
    <reaction evidence="1">
        <text>[protein]-peptidylproline (omega=180) = [protein]-peptidylproline (omega=0)</text>
        <dbReference type="Rhea" id="RHEA:16237"/>
        <dbReference type="Rhea" id="RHEA-COMP:10747"/>
        <dbReference type="Rhea" id="RHEA-COMP:10748"/>
        <dbReference type="ChEBI" id="CHEBI:83833"/>
        <dbReference type="ChEBI" id="CHEBI:83834"/>
        <dbReference type="EC" id="5.2.1.8"/>
    </reaction>
</comment>
<comment type="subcellular location">
    <subcellularLocation>
        <location evidence="1">Periplasm</location>
    </subcellularLocation>
    <text evidence="1">Is capable of associating with the outer membrane.</text>
</comment>
<comment type="domain">
    <text evidence="1">The PPIase activity resides only in the second parvulin domain. The N-terminal region and the C-terminal tail are necessary and sufficient for the chaperone activity of SurA. The PPIase activity is dispensable for SurA to function as a chaperone. The N-terminal region and the C-terminal tail are also required for porin recognition.</text>
</comment>
<keyword id="KW-0143">Chaperone</keyword>
<keyword id="KW-0413">Isomerase</keyword>
<keyword id="KW-0574">Periplasm</keyword>
<keyword id="KW-0677">Repeat</keyword>
<keyword id="KW-0697">Rotamase</keyword>
<keyword id="KW-0732">Signal</keyword>
<accession>Q1BTQ6</accession>
<name>SURA_BURO1</name>
<proteinExistence type="inferred from homology"/>
<evidence type="ECO:0000255" key="1">
    <source>
        <dbReference type="HAMAP-Rule" id="MF_01183"/>
    </source>
</evidence>
<reference key="1">
    <citation type="submission" date="2006-05" db="EMBL/GenBank/DDBJ databases">
        <title>Complete sequence of chromosome 1 of Burkholderia cenocepacia AU 1054.</title>
        <authorList>
            <consortium name="US DOE Joint Genome Institute"/>
            <person name="Copeland A."/>
            <person name="Lucas S."/>
            <person name="Lapidus A."/>
            <person name="Barry K."/>
            <person name="Detter J.C."/>
            <person name="Glavina del Rio T."/>
            <person name="Hammon N."/>
            <person name="Israni S."/>
            <person name="Dalin E."/>
            <person name="Tice H."/>
            <person name="Pitluck S."/>
            <person name="Chain P."/>
            <person name="Malfatti S."/>
            <person name="Shin M."/>
            <person name="Vergez L."/>
            <person name="Schmutz J."/>
            <person name="Larimer F."/>
            <person name="Land M."/>
            <person name="Hauser L."/>
            <person name="Kyrpides N."/>
            <person name="Lykidis A."/>
            <person name="LiPuma J.J."/>
            <person name="Konstantinidis K."/>
            <person name="Tiedje J.M."/>
            <person name="Richardson P."/>
        </authorList>
    </citation>
    <scope>NUCLEOTIDE SEQUENCE [LARGE SCALE GENOMIC DNA]</scope>
    <source>
        <strain>AU 1054</strain>
    </source>
</reference>
<organism>
    <name type="scientific">Burkholderia orbicola (strain AU 1054)</name>
    <dbReference type="NCBI Taxonomy" id="331271"/>
    <lineage>
        <taxon>Bacteria</taxon>
        <taxon>Pseudomonadati</taxon>
        <taxon>Pseudomonadota</taxon>
        <taxon>Betaproteobacteria</taxon>
        <taxon>Burkholderiales</taxon>
        <taxon>Burkholderiaceae</taxon>
        <taxon>Burkholderia</taxon>
        <taxon>Burkholderia cepacia complex</taxon>
        <taxon>Burkholderia orbicola</taxon>
    </lineage>
</organism>
<sequence>MKKTLRFAAVVSSLAASAALLVAAPAAAQALGSQGAQLADEVVAVVNNDVITGRELDQRVGLIARRLQQQNAPVPPADQLRAQVLNQMVLERIQVQKAKDDGIRIDDATVQATLQRLAQANGMTLDQYRGRLEAQGVPWSIFTNDARTELMLSKLREREVDGKITVSDAEVANYIASQRGPNASQQQDLRFQHIFIKAPTNAPQADIEAAQKKADALLQQAKSGADFERLAKNNSEANDAKKGGDLGFKSPSALPADVVDAASKLRPGQVNPTLIRVPDGFEIVRLVDRRQSQGASAAAPKIVQTHVRHILLRVGEGKSEGQARQQLVDIRNQVEAGGDFAKFARTYSQDGSASQGGDLGWISPGETVPEFERAMNNLQDGQISQPIRTEYGYHLIQVLNRREAEGSVQQQMDIARQAIGQRKAEQAYADWLRELRDSSYVQYKIGGVGPAN</sequence>
<dbReference type="EC" id="5.2.1.8" evidence="1"/>
<dbReference type="EMBL" id="CP000378">
    <property type="protein sequence ID" value="ABF76999.1"/>
    <property type="molecule type" value="Genomic_DNA"/>
</dbReference>
<dbReference type="SMR" id="Q1BTQ6"/>
<dbReference type="HOGENOM" id="CLU_034646_11_0_4"/>
<dbReference type="GO" id="GO:0030288">
    <property type="term" value="C:outer membrane-bounded periplasmic space"/>
    <property type="evidence" value="ECO:0007669"/>
    <property type="project" value="InterPro"/>
</dbReference>
<dbReference type="GO" id="GO:0042277">
    <property type="term" value="F:peptide binding"/>
    <property type="evidence" value="ECO:0007669"/>
    <property type="project" value="InterPro"/>
</dbReference>
<dbReference type="GO" id="GO:0003755">
    <property type="term" value="F:peptidyl-prolyl cis-trans isomerase activity"/>
    <property type="evidence" value="ECO:0007669"/>
    <property type="project" value="UniProtKB-UniRule"/>
</dbReference>
<dbReference type="GO" id="GO:0051082">
    <property type="term" value="F:unfolded protein binding"/>
    <property type="evidence" value="ECO:0007669"/>
    <property type="project" value="UniProtKB-UniRule"/>
</dbReference>
<dbReference type="GO" id="GO:0043165">
    <property type="term" value="P:Gram-negative-bacterium-type cell outer membrane assembly"/>
    <property type="evidence" value="ECO:0007669"/>
    <property type="project" value="InterPro"/>
</dbReference>
<dbReference type="GO" id="GO:0006457">
    <property type="term" value="P:protein folding"/>
    <property type="evidence" value="ECO:0007669"/>
    <property type="project" value="UniProtKB-UniRule"/>
</dbReference>
<dbReference type="GO" id="GO:0050821">
    <property type="term" value="P:protein stabilization"/>
    <property type="evidence" value="ECO:0007669"/>
    <property type="project" value="InterPro"/>
</dbReference>
<dbReference type="Gene3D" id="3.10.50.40">
    <property type="match status" value="2"/>
</dbReference>
<dbReference type="Gene3D" id="1.10.4030.10">
    <property type="entry name" value="Porin chaperone SurA, peptide-binding domain"/>
    <property type="match status" value="1"/>
</dbReference>
<dbReference type="HAMAP" id="MF_01183">
    <property type="entry name" value="Chaperone_SurA"/>
    <property type="match status" value="1"/>
</dbReference>
<dbReference type="InterPro" id="IPR050280">
    <property type="entry name" value="OMP_Chaperone_SurA"/>
</dbReference>
<dbReference type="InterPro" id="IPR046357">
    <property type="entry name" value="PPIase_dom_sf"/>
</dbReference>
<dbReference type="InterPro" id="IPR000297">
    <property type="entry name" value="PPIase_PpiC"/>
</dbReference>
<dbReference type="InterPro" id="IPR023034">
    <property type="entry name" value="PPIase_SurA"/>
</dbReference>
<dbReference type="InterPro" id="IPR015391">
    <property type="entry name" value="SurA_N"/>
</dbReference>
<dbReference type="InterPro" id="IPR027304">
    <property type="entry name" value="Trigger_fact/SurA_dom_sf"/>
</dbReference>
<dbReference type="PANTHER" id="PTHR47637">
    <property type="entry name" value="CHAPERONE SURA"/>
    <property type="match status" value="1"/>
</dbReference>
<dbReference type="PANTHER" id="PTHR47637:SF1">
    <property type="entry name" value="CHAPERONE SURA"/>
    <property type="match status" value="1"/>
</dbReference>
<dbReference type="Pfam" id="PF13616">
    <property type="entry name" value="Rotamase_3"/>
    <property type="match status" value="1"/>
</dbReference>
<dbReference type="Pfam" id="PF09312">
    <property type="entry name" value="SurA_N"/>
    <property type="match status" value="1"/>
</dbReference>
<dbReference type="SUPFAM" id="SSF54534">
    <property type="entry name" value="FKBP-like"/>
    <property type="match status" value="2"/>
</dbReference>
<dbReference type="SUPFAM" id="SSF109998">
    <property type="entry name" value="Triger factor/SurA peptide-binding domain-like"/>
    <property type="match status" value="1"/>
</dbReference>
<dbReference type="PROSITE" id="PS50198">
    <property type="entry name" value="PPIC_PPIASE_2"/>
    <property type="match status" value="2"/>
</dbReference>